<sequence length="325" mass="36976">MSETASWQPSASIPNLLKRAAIMAEIRRFFADRGVLEVETPCMSQATVTDIHLVPFETRFVGPGHSQGMNLWLMTSPEYHMKRLLVAGCGPVFQLCRSFRNEEMGRYHNPEFTMLEWYRPHYDMYRLMNEVDDLLQQVLDCPAAESLSYQQAFLRYLEIDPLSADKTQLREVAAKLDLSNVADTEEDRDTLLQLLFTFGVEPNIGKEKPTFVYHFPASQASLAQISTEDHRVAERFEVYYKGIELANGFHELTDAREQQQRFEQDNRKRAARGLPQHPIDQNLIEALKVGMPDCSGVALGVDRLVMLALGAETLAEVIAFSVDRA</sequence>
<comment type="function">
    <text evidence="1">With EpmB is involved in the beta-lysylation step of the post-translational modification of translation elongation factor P (EF-P) on 'Lys-34'. Catalyzes the ATP-dependent activation of (R)-beta-lysine produced by EpmB, forming a lysyl-adenylate, from which the beta-lysyl moiety is then transferred to the epsilon-amino group of EF-P 'Lys-34'.</text>
</comment>
<comment type="catalytic activity">
    <reaction evidence="1">
        <text>D-beta-lysine + L-lysyl-[protein] + ATP = N(6)-((3R)-3,6-diaminohexanoyl)-L-lysyl-[protein] + AMP + diphosphate + H(+)</text>
        <dbReference type="Rhea" id="RHEA:83435"/>
        <dbReference type="Rhea" id="RHEA-COMP:9752"/>
        <dbReference type="Rhea" id="RHEA-COMP:20131"/>
        <dbReference type="ChEBI" id="CHEBI:15378"/>
        <dbReference type="ChEBI" id="CHEBI:29969"/>
        <dbReference type="ChEBI" id="CHEBI:30616"/>
        <dbReference type="ChEBI" id="CHEBI:33019"/>
        <dbReference type="ChEBI" id="CHEBI:84138"/>
        <dbReference type="ChEBI" id="CHEBI:156053"/>
        <dbReference type="ChEBI" id="CHEBI:456215"/>
    </reaction>
    <physiologicalReaction direction="left-to-right" evidence="1">
        <dbReference type="Rhea" id="RHEA:83436"/>
    </physiologicalReaction>
</comment>
<comment type="subunit">
    <text evidence="1">Homodimer.</text>
</comment>
<comment type="similarity">
    <text evidence="1">Belongs to the class-II aminoacyl-tRNA synthetase family. EpmA subfamily.</text>
</comment>
<proteinExistence type="inferred from homology"/>
<gene>
    <name evidence="1" type="primary">epmA</name>
    <name type="synonym">yjeA</name>
    <name type="ordered locus">UTI89_C4755</name>
</gene>
<keyword id="KW-0067">ATP-binding</keyword>
<keyword id="KW-0436">Ligase</keyword>
<keyword id="KW-0547">Nucleotide-binding</keyword>
<accession>Q1R3A2</accession>
<reference key="1">
    <citation type="journal article" date="2006" name="Proc. Natl. Acad. Sci. U.S.A.">
        <title>Identification of genes subject to positive selection in uropathogenic strains of Escherichia coli: a comparative genomics approach.</title>
        <authorList>
            <person name="Chen S.L."/>
            <person name="Hung C.-S."/>
            <person name="Xu J."/>
            <person name="Reigstad C.S."/>
            <person name="Magrini V."/>
            <person name="Sabo A."/>
            <person name="Blasiar D."/>
            <person name="Bieri T."/>
            <person name="Meyer R.R."/>
            <person name="Ozersky P."/>
            <person name="Armstrong J.R."/>
            <person name="Fulton R.S."/>
            <person name="Latreille J.P."/>
            <person name="Spieth J."/>
            <person name="Hooton T.M."/>
            <person name="Mardis E.R."/>
            <person name="Hultgren S.J."/>
            <person name="Gordon J.I."/>
        </authorList>
    </citation>
    <scope>NUCLEOTIDE SEQUENCE [LARGE SCALE GENOMIC DNA]</scope>
    <source>
        <strain>UTI89 / UPEC</strain>
    </source>
</reference>
<protein>
    <recommendedName>
        <fullName evidence="1">Elongation factor P--(R)-beta-lysine ligase</fullName>
        <shortName evidence="1">EF-P--(R)-beta-lysine ligase</shortName>
        <ecNumber evidence="1">6.3.2.-</ecNumber>
    </recommendedName>
    <alternativeName>
        <fullName evidence="1">EF-P post-translational modification enzyme A</fullName>
    </alternativeName>
    <alternativeName>
        <fullName evidence="1">EF-P-lysine lysyltransferase</fullName>
    </alternativeName>
</protein>
<evidence type="ECO:0000255" key="1">
    <source>
        <dbReference type="HAMAP-Rule" id="MF_00174"/>
    </source>
</evidence>
<name>EPMA_ECOUT</name>
<dbReference type="EC" id="6.3.2.-" evidence="1"/>
<dbReference type="EMBL" id="CP000243">
    <property type="protein sequence ID" value="ABE10162.1"/>
    <property type="molecule type" value="Genomic_DNA"/>
</dbReference>
<dbReference type="RefSeq" id="WP_000004771.1">
    <property type="nucleotide sequence ID" value="NZ_CP064825.1"/>
</dbReference>
<dbReference type="SMR" id="Q1R3A2"/>
<dbReference type="GeneID" id="93777667"/>
<dbReference type="KEGG" id="eci:UTI89_C4755"/>
<dbReference type="HOGENOM" id="CLU_008255_1_1_6"/>
<dbReference type="Proteomes" id="UP000001952">
    <property type="component" value="Chromosome"/>
</dbReference>
<dbReference type="GO" id="GO:0005829">
    <property type="term" value="C:cytosol"/>
    <property type="evidence" value="ECO:0007669"/>
    <property type="project" value="TreeGrafter"/>
</dbReference>
<dbReference type="GO" id="GO:0016880">
    <property type="term" value="F:acid-ammonia (or amide) ligase activity"/>
    <property type="evidence" value="ECO:0007669"/>
    <property type="project" value="UniProtKB-UniRule"/>
</dbReference>
<dbReference type="GO" id="GO:0005524">
    <property type="term" value="F:ATP binding"/>
    <property type="evidence" value="ECO:0007669"/>
    <property type="project" value="UniProtKB-UniRule"/>
</dbReference>
<dbReference type="GO" id="GO:0004824">
    <property type="term" value="F:lysine-tRNA ligase activity"/>
    <property type="evidence" value="ECO:0007669"/>
    <property type="project" value="InterPro"/>
</dbReference>
<dbReference type="GO" id="GO:0000049">
    <property type="term" value="F:tRNA binding"/>
    <property type="evidence" value="ECO:0007669"/>
    <property type="project" value="TreeGrafter"/>
</dbReference>
<dbReference type="GO" id="GO:0006430">
    <property type="term" value="P:lysyl-tRNA aminoacylation"/>
    <property type="evidence" value="ECO:0007669"/>
    <property type="project" value="InterPro"/>
</dbReference>
<dbReference type="FunFam" id="3.30.930.10:FF:000017">
    <property type="entry name" value="Elongation factor P--(R)-beta-lysine ligase"/>
    <property type="match status" value="1"/>
</dbReference>
<dbReference type="Gene3D" id="3.30.930.10">
    <property type="entry name" value="Bira Bifunctional Protein, Domain 2"/>
    <property type="match status" value="1"/>
</dbReference>
<dbReference type="HAMAP" id="MF_00174">
    <property type="entry name" value="EF_P_modif_A"/>
    <property type="match status" value="1"/>
</dbReference>
<dbReference type="InterPro" id="IPR004364">
    <property type="entry name" value="Aa-tRNA-synt_II"/>
</dbReference>
<dbReference type="InterPro" id="IPR006195">
    <property type="entry name" value="aa-tRNA-synth_II"/>
</dbReference>
<dbReference type="InterPro" id="IPR045864">
    <property type="entry name" value="aa-tRNA-synth_II/BPL/LPL"/>
</dbReference>
<dbReference type="InterPro" id="IPR004525">
    <property type="entry name" value="EpmA"/>
</dbReference>
<dbReference type="InterPro" id="IPR018149">
    <property type="entry name" value="Lys-tRNA-synth_II_C"/>
</dbReference>
<dbReference type="NCBIfam" id="TIGR00462">
    <property type="entry name" value="genX"/>
    <property type="match status" value="1"/>
</dbReference>
<dbReference type="NCBIfam" id="NF006828">
    <property type="entry name" value="PRK09350.1"/>
    <property type="match status" value="1"/>
</dbReference>
<dbReference type="PANTHER" id="PTHR42918:SF6">
    <property type="entry name" value="ELONGATION FACTOR P--(R)-BETA-LYSINE LIGASE"/>
    <property type="match status" value="1"/>
</dbReference>
<dbReference type="PANTHER" id="PTHR42918">
    <property type="entry name" value="LYSYL-TRNA SYNTHETASE"/>
    <property type="match status" value="1"/>
</dbReference>
<dbReference type="Pfam" id="PF00152">
    <property type="entry name" value="tRNA-synt_2"/>
    <property type="match status" value="1"/>
</dbReference>
<dbReference type="PRINTS" id="PR00982">
    <property type="entry name" value="TRNASYNTHLYS"/>
</dbReference>
<dbReference type="SUPFAM" id="SSF55681">
    <property type="entry name" value="Class II aaRS and biotin synthetases"/>
    <property type="match status" value="1"/>
</dbReference>
<dbReference type="PROSITE" id="PS50862">
    <property type="entry name" value="AA_TRNA_LIGASE_II"/>
    <property type="match status" value="1"/>
</dbReference>
<feature type="chain" id="PRO_1000023621" description="Elongation factor P--(R)-beta-lysine ligase">
    <location>
        <begin position="1"/>
        <end position="325"/>
    </location>
</feature>
<feature type="binding site" evidence="1">
    <location>
        <begin position="76"/>
        <end position="78"/>
    </location>
    <ligand>
        <name>substrate</name>
    </ligand>
</feature>
<feature type="binding site" evidence="1">
    <location>
        <begin position="100"/>
        <end position="102"/>
    </location>
    <ligand>
        <name>ATP</name>
        <dbReference type="ChEBI" id="CHEBI:30616"/>
    </ligand>
</feature>
<feature type="binding site" evidence="1">
    <location>
        <position position="109"/>
    </location>
    <ligand>
        <name>ATP</name>
        <dbReference type="ChEBI" id="CHEBI:30616"/>
    </ligand>
</feature>
<feature type="binding site" evidence="1">
    <location>
        <position position="118"/>
    </location>
    <ligand>
        <name>substrate</name>
    </ligand>
</feature>
<feature type="binding site" evidence="1">
    <location>
        <begin position="244"/>
        <end position="245"/>
    </location>
    <ligand>
        <name>ATP</name>
        <dbReference type="ChEBI" id="CHEBI:30616"/>
    </ligand>
</feature>
<feature type="binding site" evidence="1">
    <location>
        <position position="251"/>
    </location>
    <ligand>
        <name>substrate</name>
    </ligand>
</feature>
<feature type="binding site" evidence="1">
    <location>
        <position position="300"/>
    </location>
    <ligand>
        <name>ATP</name>
        <dbReference type="ChEBI" id="CHEBI:30616"/>
    </ligand>
</feature>
<organism>
    <name type="scientific">Escherichia coli (strain UTI89 / UPEC)</name>
    <dbReference type="NCBI Taxonomy" id="364106"/>
    <lineage>
        <taxon>Bacteria</taxon>
        <taxon>Pseudomonadati</taxon>
        <taxon>Pseudomonadota</taxon>
        <taxon>Gammaproteobacteria</taxon>
        <taxon>Enterobacterales</taxon>
        <taxon>Enterobacteriaceae</taxon>
        <taxon>Escherichia</taxon>
    </lineage>
</organism>